<proteinExistence type="inferred from homology"/>
<accession>P54243</accession>
<organism>
    <name type="scientific">Oenothera sinuata var. hirsuta</name>
    <name type="common">Mexican evening primrose</name>
    <name type="synonym">Oenothera mexicana</name>
    <dbReference type="NCBI Taxonomy" id="49758"/>
    <lineage>
        <taxon>Eukaryota</taxon>
        <taxon>Viridiplantae</taxon>
        <taxon>Streptophyta</taxon>
        <taxon>Embryophyta</taxon>
        <taxon>Tracheophyta</taxon>
        <taxon>Spermatophyta</taxon>
        <taxon>Magnoliopsida</taxon>
        <taxon>eudicotyledons</taxon>
        <taxon>Gunneridae</taxon>
        <taxon>Pentapetalae</taxon>
        <taxon>rosids</taxon>
        <taxon>malvids</taxon>
        <taxon>Myrtales</taxon>
        <taxon>Onagraceae</taxon>
        <taxon>Onagroideae</taxon>
        <taxon>Onagreae</taxon>
        <taxon>Oenothera</taxon>
    </lineage>
</organism>
<protein>
    <recommendedName>
        <fullName>Glucose-6-phosphate isomerase, cytosolic</fullName>
        <shortName>GPI</shortName>
        <ecNumber>5.3.1.9</ecNumber>
    </recommendedName>
    <alternativeName>
        <fullName>Phosphoglucose isomerase</fullName>
        <shortName>PGI</shortName>
    </alternativeName>
    <alternativeName>
        <fullName>Phosphohexose isomerase</fullName>
        <shortName>PHI</shortName>
    </alternativeName>
</protein>
<feature type="chain" id="PRO_0000180565" description="Glucose-6-phosphate isomerase, cytosolic">
    <location>
        <begin position="1"/>
        <end position="568"/>
    </location>
</feature>
<feature type="active site" description="Proton donor" evidence="1">
    <location>
        <position position="360"/>
    </location>
</feature>
<feature type="active site" evidence="1">
    <location>
        <position position="391"/>
    </location>
</feature>
<feature type="active site" evidence="1">
    <location>
        <position position="516"/>
    </location>
</feature>
<sequence length="568" mass="62685">MASPALISETEAWKDLKAHVEDIKRTHLRELMGDTERCQSMMVEFDNIFLDYSRQQASPDTINKLYKLADAAHLKQKIDRMYNGDHINSTENRSVLHVALRAPRNSAICSDGKNVVPDVWNVLDKIKDFSERVRNGSWVGATGKELKDVIAVGIGGSFLGPLFVHTALQTDPEASKNARGRELRFLANVDPIDAARNISGLDPETTLVVVVSKTFTTAETMLNARTLREWISSALGPSAVAKHMVAVSTNLPLVEKFGIDPNNAFAFWDWVGGRYSVCSAVGVLPLSLQYGFAVVEKFLQGAHNIDQHFSSAPFEKNIPVLLGLLSVWNVSFLGYPARAILPYSQALEKLAPHIQQVSMESNGKGVSIDGLPLPFESGEIDFGEPGTNGQHSFYQLIHQGRVIPCDFIGVVKSQQPVYLKGEVVNNHDELMSNFFAQPDALAYGKTPEQLKKENVSEHLIPHKTFTGNRPSVSILLPTLDAYRIGQLLAIYEHRVAVQGFIWGINSFDQWGVELGKSLATQVRKQLHASRVKGESVEGFNFSTKTLLTRYLEATSDVPAAPSTLLPKI</sequence>
<comment type="catalytic activity">
    <reaction>
        <text>alpha-D-glucose 6-phosphate = beta-D-fructose 6-phosphate</text>
        <dbReference type="Rhea" id="RHEA:11816"/>
        <dbReference type="ChEBI" id="CHEBI:57634"/>
        <dbReference type="ChEBI" id="CHEBI:58225"/>
        <dbReference type="EC" id="5.3.1.9"/>
    </reaction>
</comment>
<comment type="pathway">
    <text>Carbohydrate degradation; glycolysis; D-glyceraldehyde 3-phosphate and glycerone phosphate from D-glucose: step 2/4.</text>
</comment>
<comment type="subunit">
    <text evidence="1">Homodimer.</text>
</comment>
<comment type="subcellular location">
    <subcellularLocation>
        <location evidence="1">Cytoplasm</location>
    </subcellularLocation>
</comment>
<comment type="similarity">
    <text evidence="2">Belongs to the GPI family.</text>
</comment>
<reference key="1">
    <citation type="journal article" date="1996" name="Syst. Bot.">
        <title>Phylogenetic relationships among the sections of Clarkia (Onagraceae) inferred from the nucleotide sequences of PgiC.</title>
        <authorList>
            <person name="Gottlieb L.D."/>
            <person name="Ford V.S."/>
        </authorList>
        <dbReference type="AGRICOLA" id="IND20535960"/>
    </citation>
    <scope>NUCLEOTIDE SEQUENCE [GENOMIC DNA]</scope>
    <source>
        <strain>Population from Rockdale TX</strain>
    </source>
</reference>
<gene>
    <name type="primary">PGIC</name>
</gene>
<evidence type="ECO:0000250" key="1"/>
<evidence type="ECO:0000305" key="2"/>
<dbReference type="EC" id="5.3.1.9"/>
<dbReference type="EMBL" id="X89397">
    <property type="protein sequence ID" value="CAA61577.1"/>
    <property type="molecule type" value="Genomic_DNA"/>
</dbReference>
<dbReference type="SMR" id="P54243"/>
<dbReference type="UniPathway" id="UPA00109">
    <property type="reaction ID" value="UER00181"/>
</dbReference>
<dbReference type="GO" id="GO:0005829">
    <property type="term" value="C:cytosol"/>
    <property type="evidence" value="ECO:0007669"/>
    <property type="project" value="TreeGrafter"/>
</dbReference>
<dbReference type="GO" id="GO:0097367">
    <property type="term" value="F:carbohydrate derivative binding"/>
    <property type="evidence" value="ECO:0007669"/>
    <property type="project" value="InterPro"/>
</dbReference>
<dbReference type="GO" id="GO:0004347">
    <property type="term" value="F:glucose-6-phosphate isomerase activity"/>
    <property type="evidence" value="ECO:0007669"/>
    <property type="project" value="UniProtKB-EC"/>
</dbReference>
<dbReference type="GO" id="GO:0048029">
    <property type="term" value="F:monosaccharide binding"/>
    <property type="evidence" value="ECO:0007669"/>
    <property type="project" value="TreeGrafter"/>
</dbReference>
<dbReference type="GO" id="GO:0006094">
    <property type="term" value="P:gluconeogenesis"/>
    <property type="evidence" value="ECO:0007669"/>
    <property type="project" value="UniProtKB-KW"/>
</dbReference>
<dbReference type="GO" id="GO:0051156">
    <property type="term" value="P:glucose 6-phosphate metabolic process"/>
    <property type="evidence" value="ECO:0007669"/>
    <property type="project" value="TreeGrafter"/>
</dbReference>
<dbReference type="GO" id="GO:0006096">
    <property type="term" value="P:glycolytic process"/>
    <property type="evidence" value="ECO:0007669"/>
    <property type="project" value="UniProtKB-UniPathway"/>
</dbReference>
<dbReference type="CDD" id="cd05015">
    <property type="entry name" value="SIS_PGI_1"/>
    <property type="match status" value="1"/>
</dbReference>
<dbReference type="CDD" id="cd05016">
    <property type="entry name" value="SIS_PGI_2"/>
    <property type="match status" value="1"/>
</dbReference>
<dbReference type="FunFam" id="1.10.1390.10:FF:000002">
    <property type="entry name" value="Glucose-6-phosphate isomerase"/>
    <property type="match status" value="1"/>
</dbReference>
<dbReference type="FunFam" id="3.40.50.10490:FF:000018">
    <property type="entry name" value="Glucose-6-phosphate isomerase"/>
    <property type="match status" value="1"/>
</dbReference>
<dbReference type="FunFam" id="3.40.50.10490:FF:000031">
    <property type="entry name" value="Glucose-6-phosphate isomerase"/>
    <property type="match status" value="1"/>
</dbReference>
<dbReference type="FunFam" id="3.40.50.10490:FF:000048">
    <property type="entry name" value="Glucose-6-phosphate isomerase"/>
    <property type="match status" value="1"/>
</dbReference>
<dbReference type="Gene3D" id="1.10.1390.10">
    <property type="match status" value="1"/>
</dbReference>
<dbReference type="Gene3D" id="3.40.50.10490">
    <property type="entry name" value="Glucose-6-phosphate isomerase like protein, domain 1"/>
    <property type="match status" value="2"/>
</dbReference>
<dbReference type="HAMAP" id="MF_00473">
    <property type="entry name" value="G6P_isomerase"/>
    <property type="match status" value="1"/>
</dbReference>
<dbReference type="InterPro" id="IPR001672">
    <property type="entry name" value="G6P_Isomerase"/>
</dbReference>
<dbReference type="InterPro" id="IPR023096">
    <property type="entry name" value="G6P_Isomerase_C"/>
</dbReference>
<dbReference type="InterPro" id="IPR018189">
    <property type="entry name" value="Phosphoglucose_isomerase_CS"/>
</dbReference>
<dbReference type="InterPro" id="IPR046348">
    <property type="entry name" value="SIS_dom_sf"/>
</dbReference>
<dbReference type="InterPro" id="IPR035476">
    <property type="entry name" value="SIS_PGI_1"/>
</dbReference>
<dbReference type="InterPro" id="IPR035482">
    <property type="entry name" value="SIS_PGI_2"/>
</dbReference>
<dbReference type="NCBIfam" id="NF001211">
    <property type="entry name" value="PRK00179.1"/>
    <property type="match status" value="1"/>
</dbReference>
<dbReference type="PANTHER" id="PTHR11469">
    <property type="entry name" value="GLUCOSE-6-PHOSPHATE ISOMERASE"/>
    <property type="match status" value="1"/>
</dbReference>
<dbReference type="PANTHER" id="PTHR11469:SF1">
    <property type="entry name" value="GLUCOSE-6-PHOSPHATE ISOMERASE"/>
    <property type="match status" value="1"/>
</dbReference>
<dbReference type="Pfam" id="PF00342">
    <property type="entry name" value="PGI"/>
    <property type="match status" value="1"/>
</dbReference>
<dbReference type="PRINTS" id="PR00662">
    <property type="entry name" value="G6PISOMERASE"/>
</dbReference>
<dbReference type="SUPFAM" id="SSF53697">
    <property type="entry name" value="SIS domain"/>
    <property type="match status" value="1"/>
</dbReference>
<dbReference type="PROSITE" id="PS00765">
    <property type="entry name" value="P_GLUCOSE_ISOMERASE_1"/>
    <property type="match status" value="1"/>
</dbReference>
<dbReference type="PROSITE" id="PS00174">
    <property type="entry name" value="P_GLUCOSE_ISOMERASE_2"/>
    <property type="match status" value="1"/>
</dbReference>
<dbReference type="PROSITE" id="PS51463">
    <property type="entry name" value="P_GLUCOSE_ISOMERASE_3"/>
    <property type="match status" value="1"/>
</dbReference>
<keyword id="KW-0963">Cytoplasm</keyword>
<keyword id="KW-0312">Gluconeogenesis</keyword>
<keyword id="KW-0324">Glycolysis</keyword>
<keyword id="KW-0413">Isomerase</keyword>
<name>G6PI_OENSH</name>